<reference key="1">
    <citation type="journal article" date="2009" name="J. Bacteriol.">
        <title>The genome of Burkholderia cenocepacia J2315, an epidemic pathogen of cystic fibrosis patients.</title>
        <authorList>
            <person name="Holden M.T."/>
            <person name="Seth-Smith H.M."/>
            <person name="Crossman L.C."/>
            <person name="Sebaihia M."/>
            <person name="Bentley S.D."/>
            <person name="Cerdeno-Tarraga A.M."/>
            <person name="Thomson N.R."/>
            <person name="Bason N."/>
            <person name="Quail M.A."/>
            <person name="Sharp S."/>
            <person name="Cherevach I."/>
            <person name="Churcher C."/>
            <person name="Goodhead I."/>
            <person name="Hauser H."/>
            <person name="Holroyd N."/>
            <person name="Mungall K."/>
            <person name="Scott P."/>
            <person name="Walker D."/>
            <person name="White B."/>
            <person name="Rose H."/>
            <person name="Iversen P."/>
            <person name="Mil-Homens D."/>
            <person name="Rocha E.P."/>
            <person name="Fialho A.M."/>
            <person name="Baldwin A."/>
            <person name="Dowson C."/>
            <person name="Barrell B.G."/>
            <person name="Govan J.R."/>
            <person name="Vandamme P."/>
            <person name="Hart C.A."/>
            <person name="Mahenthiralingam E."/>
            <person name="Parkhill J."/>
        </authorList>
    </citation>
    <scope>NUCLEOTIDE SEQUENCE [LARGE SCALE GENOMIC DNA]</scope>
    <source>
        <strain>ATCC BAA-245 / DSM 16553 / LMG 16656 / NCTC 13227 / J2315 / CF5610</strain>
    </source>
</reference>
<keyword id="KW-0687">Ribonucleoprotein</keyword>
<keyword id="KW-0689">Ribosomal protein</keyword>
<keyword id="KW-0694">RNA-binding</keyword>
<keyword id="KW-0699">rRNA-binding</keyword>
<organism>
    <name type="scientific">Burkholderia cenocepacia (strain ATCC BAA-245 / DSM 16553 / LMG 16656 / NCTC 13227 / J2315 / CF5610)</name>
    <name type="common">Burkholderia cepacia (strain J2315)</name>
    <dbReference type="NCBI Taxonomy" id="216591"/>
    <lineage>
        <taxon>Bacteria</taxon>
        <taxon>Pseudomonadati</taxon>
        <taxon>Pseudomonadota</taxon>
        <taxon>Betaproteobacteria</taxon>
        <taxon>Burkholderiales</taxon>
        <taxon>Burkholderiaceae</taxon>
        <taxon>Burkholderia</taxon>
        <taxon>Burkholderia cepacia complex</taxon>
    </lineage>
</organism>
<comment type="function">
    <text evidence="1">This is one of the proteins that bind and probably mediate the attachment of the 5S RNA into the large ribosomal subunit, where it forms part of the central protuberance.</text>
</comment>
<comment type="subunit">
    <text evidence="1">Part of the 50S ribosomal subunit; part of the 5S rRNA/L5/L18/L25 subcomplex. Contacts the 5S and 23S rRNAs.</text>
</comment>
<comment type="similarity">
    <text evidence="1">Belongs to the universal ribosomal protein uL18 family.</text>
</comment>
<evidence type="ECO:0000255" key="1">
    <source>
        <dbReference type="HAMAP-Rule" id="MF_01337"/>
    </source>
</evidence>
<evidence type="ECO:0000305" key="2"/>
<protein>
    <recommendedName>
        <fullName evidence="1">Large ribosomal subunit protein uL18</fullName>
    </recommendedName>
    <alternativeName>
        <fullName evidence="2">50S ribosomal protein L18</fullName>
    </alternativeName>
</protein>
<gene>
    <name evidence="1" type="primary">rplR</name>
    <name type="ordered locus">BceJ2315_02530</name>
    <name type="ORF">BCAL0250</name>
</gene>
<dbReference type="EMBL" id="AM747720">
    <property type="protein sequence ID" value="CAR50561.1"/>
    <property type="molecule type" value="Genomic_DNA"/>
</dbReference>
<dbReference type="RefSeq" id="WP_006477183.1">
    <property type="nucleotide sequence ID" value="NC_011000.1"/>
</dbReference>
<dbReference type="SMR" id="B4E5D6"/>
<dbReference type="GeneID" id="98107144"/>
<dbReference type="KEGG" id="bcj:BCAL0250"/>
<dbReference type="eggNOG" id="COG0256">
    <property type="taxonomic scope" value="Bacteria"/>
</dbReference>
<dbReference type="HOGENOM" id="CLU_098841_0_1_4"/>
<dbReference type="BioCyc" id="BCEN216591:G1G1V-293-MONOMER"/>
<dbReference type="Proteomes" id="UP000001035">
    <property type="component" value="Chromosome 1"/>
</dbReference>
<dbReference type="GO" id="GO:0022625">
    <property type="term" value="C:cytosolic large ribosomal subunit"/>
    <property type="evidence" value="ECO:0007669"/>
    <property type="project" value="TreeGrafter"/>
</dbReference>
<dbReference type="GO" id="GO:0008097">
    <property type="term" value="F:5S rRNA binding"/>
    <property type="evidence" value="ECO:0007669"/>
    <property type="project" value="TreeGrafter"/>
</dbReference>
<dbReference type="GO" id="GO:0003735">
    <property type="term" value="F:structural constituent of ribosome"/>
    <property type="evidence" value="ECO:0007669"/>
    <property type="project" value="InterPro"/>
</dbReference>
<dbReference type="GO" id="GO:0006412">
    <property type="term" value="P:translation"/>
    <property type="evidence" value="ECO:0007669"/>
    <property type="project" value="UniProtKB-UniRule"/>
</dbReference>
<dbReference type="CDD" id="cd00432">
    <property type="entry name" value="Ribosomal_L18_L5e"/>
    <property type="match status" value="1"/>
</dbReference>
<dbReference type="FunFam" id="3.30.420.100:FF:000001">
    <property type="entry name" value="50S ribosomal protein L18"/>
    <property type="match status" value="1"/>
</dbReference>
<dbReference type="Gene3D" id="3.30.420.100">
    <property type="match status" value="1"/>
</dbReference>
<dbReference type="HAMAP" id="MF_01337_B">
    <property type="entry name" value="Ribosomal_uL18_B"/>
    <property type="match status" value="1"/>
</dbReference>
<dbReference type="InterPro" id="IPR004389">
    <property type="entry name" value="Ribosomal_uL18_bac-type"/>
</dbReference>
<dbReference type="InterPro" id="IPR005484">
    <property type="entry name" value="Ribosomal_uL18_bac/euk"/>
</dbReference>
<dbReference type="NCBIfam" id="TIGR00060">
    <property type="entry name" value="L18_bact"/>
    <property type="match status" value="1"/>
</dbReference>
<dbReference type="PANTHER" id="PTHR12899">
    <property type="entry name" value="39S RIBOSOMAL PROTEIN L18, MITOCHONDRIAL"/>
    <property type="match status" value="1"/>
</dbReference>
<dbReference type="PANTHER" id="PTHR12899:SF3">
    <property type="entry name" value="LARGE RIBOSOMAL SUBUNIT PROTEIN UL18M"/>
    <property type="match status" value="1"/>
</dbReference>
<dbReference type="Pfam" id="PF00861">
    <property type="entry name" value="Ribosomal_L18p"/>
    <property type="match status" value="1"/>
</dbReference>
<dbReference type="SUPFAM" id="SSF53137">
    <property type="entry name" value="Translational machinery components"/>
    <property type="match status" value="1"/>
</dbReference>
<proteinExistence type="inferred from homology"/>
<sequence length="121" mass="13106">MDKTQSRLRRARQTRIKIAELQVARLAVHRTNTHIYAQVFSPCGTKVLASASTLEAEVRAELADKSGKGGNVNAATLIGKRIAEKAKAAGIESVAFDRSGFRYHGRVKALAEAAREAGLKF</sequence>
<feature type="chain" id="PRO_1000142631" description="Large ribosomal subunit protein uL18">
    <location>
        <begin position="1"/>
        <end position="121"/>
    </location>
</feature>
<accession>B4E5D6</accession>
<name>RL18_BURCJ</name>